<protein>
    <recommendedName>
        <fullName evidence="4">Germacrene A synthase</fullName>
        <shortName evidence="4">TpGAS</shortName>
        <ecNumber evidence="2">4.2.3.23</ecNumber>
    </recommendedName>
</protein>
<organism>
    <name type="scientific">Tanacetum parthenium</name>
    <name type="common">Feverfew</name>
    <name type="synonym">Matricaria parthenium</name>
    <dbReference type="NCBI Taxonomy" id="127999"/>
    <lineage>
        <taxon>Eukaryota</taxon>
        <taxon>Viridiplantae</taxon>
        <taxon>Streptophyta</taxon>
        <taxon>Embryophyta</taxon>
        <taxon>Tracheophyta</taxon>
        <taxon>Spermatophyta</taxon>
        <taxon>Magnoliopsida</taxon>
        <taxon>eudicotyledons</taxon>
        <taxon>Gunneridae</taxon>
        <taxon>Pentapetalae</taxon>
        <taxon>asterids</taxon>
        <taxon>campanulids</taxon>
        <taxon>Asterales</taxon>
        <taxon>Asteraceae</taxon>
        <taxon>Asteroideae</taxon>
        <taxon>Anthemideae</taxon>
        <taxon>Anthemidinae</taxon>
        <taxon>Tanacetum</taxon>
    </lineage>
</organism>
<keyword id="KW-0456">Lyase</keyword>
<keyword id="KW-0460">Magnesium</keyword>
<keyword id="KW-0479">Metal-binding</keyword>
<accession>F8UL80</accession>
<feature type="chain" id="PRO_0000448394" description="Germacrene A synthase">
    <location>
        <begin position="1"/>
        <end position="559"/>
    </location>
</feature>
<feature type="short sequence motif" description="DDXXD motif" evidence="5">
    <location>
        <begin position="312"/>
        <end position="316"/>
    </location>
</feature>
<feature type="binding site" evidence="1">
    <location>
        <position position="312"/>
    </location>
    <ligand>
        <name>Mg(2+)</name>
        <dbReference type="ChEBI" id="CHEBI:18420"/>
        <label>1</label>
    </ligand>
</feature>
<feature type="binding site" evidence="1">
    <location>
        <position position="312"/>
    </location>
    <ligand>
        <name>Mg(2+)</name>
        <dbReference type="ChEBI" id="CHEBI:18420"/>
        <label>2</label>
    </ligand>
</feature>
<feature type="binding site" evidence="1">
    <location>
        <position position="316"/>
    </location>
    <ligand>
        <name>Mg(2+)</name>
        <dbReference type="ChEBI" id="CHEBI:18420"/>
        <label>1</label>
    </ligand>
</feature>
<feature type="binding site" evidence="1">
    <location>
        <position position="316"/>
    </location>
    <ligand>
        <name>Mg(2+)</name>
        <dbReference type="ChEBI" id="CHEBI:18420"/>
        <label>2</label>
    </ligand>
</feature>
<feature type="binding site" evidence="1">
    <location>
        <position position="456"/>
    </location>
    <ligand>
        <name>Mg(2+)</name>
        <dbReference type="ChEBI" id="CHEBI:18420"/>
        <label>3</label>
    </ligand>
</feature>
<feature type="binding site" evidence="1">
    <location>
        <position position="460"/>
    </location>
    <ligand>
        <name>Mg(2+)</name>
        <dbReference type="ChEBI" id="CHEBI:18420"/>
        <label>3</label>
    </ligand>
</feature>
<feature type="binding site" evidence="1">
    <location>
        <position position="464"/>
    </location>
    <ligand>
        <name>Mg(2+)</name>
        <dbReference type="ChEBI" id="CHEBI:18420"/>
        <label>3</label>
    </ligand>
</feature>
<reference key="1">
    <citation type="journal article" date="2011" name="Phytochemistry">
        <title>Biosynthesis and localization of parthenolide in glandular trichomes of feverfew (Tanacetum parthenium L. Schulz Bip.).</title>
        <authorList>
            <person name="Majdi M."/>
            <person name="Liu Q."/>
            <person name="Karimzadeh G."/>
            <person name="Malboobi M.A."/>
            <person name="Beekwilder J."/>
            <person name="Cankar K."/>
            <person name="de Vos R."/>
            <person name="Todorovic S."/>
            <person name="Simonovic A."/>
            <person name="Bouwmeester H."/>
        </authorList>
    </citation>
    <scope>NUCLEOTIDE SEQUENCE [MRNA]</scope>
    <scope>FUNCTION</scope>
    <scope>CATALYTIC ACTIVITY</scope>
    <scope>TISSUE SPECIFICITY</scope>
    <scope>DEVELOPMENTAL STAGE</scope>
</reference>
<reference key="2">
    <citation type="journal article" date="2014" name="Metab. Eng.">
        <title>Elucidation and in planta reconstitution of the parthenolide biosynthetic pathway.</title>
        <authorList>
            <person name="Liu Q."/>
            <person name="Manzano D."/>
            <person name="Tanic N."/>
            <person name="Pesic M."/>
            <person name="Bankovic J."/>
            <person name="Pateraki I."/>
            <person name="Ricard L."/>
            <person name="Ferrer A."/>
            <person name="de Vos R."/>
            <person name="van de Krol S."/>
            <person name="Bouwmeester H."/>
        </authorList>
    </citation>
    <scope>TISSUE SPECIFICITY</scope>
    <scope>DEVELOPMENTAL STAGE</scope>
</reference>
<reference key="3">
    <citation type="journal article" date="2019" name="Nat. Prod. Rep.">
        <title>Non-volatile natural products in plant glandular trichomes: chemistry, biological activities and biosynthesis.</title>
        <authorList>
            <person name="Liu Y."/>
            <person name="Jing S.-X."/>
            <person name="Luo S.-H."/>
            <person name="Li S.-H."/>
        </authorList>
    </citation>
    <scope>PATHWAY</scope>
    <scope>REVIEW</scope>
</reference>
<sequence length="559" mass="64458">MAAVQATTGIQANTKTSAEPVRPLANFPPSVWGDRFLSFSLDKSEFERYAIAMEKPKEDVRKLIVDSTMDSNEKLGLIYSVHRVGLTYMFLQEIESQLDKLFNEFSLQDYEEVDLYTISINFQVFRHLGYKLPCDVFKKFKDAISGTFKESITSDVRGMLGLYESAQLRIRGEKILDEASVFIEGKLKSVVNTLEGNLAQQVKQSLRRPFHQGMPMVEARLYFSNYEEECSSHDSLFKLAKLHFKYLELQQKEELRIVTKWYKDMRFQETTPYIRDRVPEIYLWILGLYFEPRYSLARIIATKITLFLVVLDDTYDAYATIEEIRLLTDAMNKWDISAMEQIPEYIRPFYKVLLDEYAEIGKRMAKEGRADTVIASKEAFQDIARGYLEEAEWTNSGYVASFPEYMKNGLITSAYNVISKSALVGMGEIVSEDALAWYESHPKPLQASELISRLQDDVMTYQFERERGQSATGVDAYIKTYGVSEKKAIDELKIMIENAWKDINEGCLKPRQVSMDLLAPILNLARMIDVVYRYDDGFTFPGSTLKEYINLLFVDSLPV</sequence>
<dbReference type="EC" id="4.2.3.23" evidence="2"/>
<dbReference type="EMBL" id="JF819848">
    <property type="protein sequence ID" value="AEH41844.1"/>
    <property type="molecule type" value="mRNA"/>
</dbReference>
<dbReference type="SMR" id="F8UL80"/>
<dbReference type="BioCyc" id="MetaCyc:MONOMER-18664"/>
<dbReference type="BRENDA" id="4.2.3.23">
    <property type="organism ID" value="12835"/>
</dbReference>
<dbReference type="UniPathway" id="UPA00213"/>
<dbReference type="GO" id="GO:0034005">
    <property type="term" value="F:germacrene-A synthase activity"/>
    <property type="evidence" value="ECO:0000314"/>
    <property type="project" value="UniProtKB"/>
</dbReference>
<dbReference type="GO" id="GO:0000287">
    <property type="term" value="F:magnesium ion binding"/>
    <property type="evidence" value="ECO:0007669"/>
    <property type="project" value="InterPro"/>
</dbReference>
<dbReference type="GO" id="GO:0016102">
    <property type="term" value="P:diterpenoid biosynthetic process"/>
    <property type="evidence" value="ECO:0007669"/>
    <property type="project" value="InterPro"/>
</dbReference>
<dbReference type="GO" id="GO:0051762">
    <property type="term" value="P:sesquiterpene biosynthetic process"/>
    <property type="evidence" value="ECO:0000314"/>
    <property type="project" value="UniProtKB"/>
</dbReference>
<dbReference type="CDD" id="cd00684">
    <property type="entry name" value="Terpene_cyclase_plant_C1"/>
    <property type="match status" value="1"/>
</dbReference>
<dbReference type="FunFam" id="1.10.600.10:FF:000007">
    <property type="entry name" value="Isoprene synthase, chloroplastic"/>
    <property type="match status" value="1"/>
</dbReference>
<dbReference type="FunFam" id="1.50.10.130:FF:000001">
    <property type="entry name" value="Isoprene synthase, chloroplastic"/>
    <property type="match status" value="1"/>
</dbReference>
<dbReference type="Gene3D" id="1.10.600.10">
    <property type="entry name" value="Farnesyl Diphosphate Synthase"/>
    <property type="match status" value="1"/>
</dbReference>
<dbReference type="Gene3D" id="1.50.10.130">
    <property type="entry name" value="Terpene synthase, N-terminal domain"/>
    <property type="match status" value="1"/>
</dbReference>
<dbReference type="InterPro" id="IPR008949">
    <property type="entry name" value="Isoprenoid_synthase_dom_sf"/>
</dbReference>
<dbReference type="InterPro" id="IPR034741">
    <property type="entry name" value="Terpene_cyclase-like_1_C"/>
</dbReference>
<dbReference type="InterPro" id="IPR044814">
    <property type="entry name" value="Terpene_cyclase_plant_C1"/>
</dbReference>
<dbReference type="InterPro" id="IPR001906">
    <property type="entry name" value="Terpene_synth_N"/>
</dbReference>
<dbReference type="InterPro" id="IPR036965">
    <property type="entry name" value="Terpene_synth_N_sf"/>
</dbReference>
<dbReference type="InterPro" id="IPR050148">
    <property type="entry name" value="Terpene_synthase-like"/>
</dbReference>
<dbReference type="InterPro" id="IPR005630">
    <property type="entry name" value="Terpene_synthase_metal-bd"/>
</dbReference>
<dbReference type="InterPro" id="IPR008930">
    <property type="entry name" value="Terpenoid_cyclase/PrenylTrfase"/>
</dbReference>
<dbReference type="PANTHER" id="PTHR31225:SF120">
    <property type="entry name" value="GERMACRENE-A SYNTHASE"/>
    <property type="match status" value="1"/>
</dbReference>
<dbReference type="PANTHER" id="PTHR31225">
    <property type="entry name" value="OS04G0344100 PROTEIN-RELATED"/>
    <property type="match status" value="1"/>
</dbReference>
<dbReference type="Pfam" id="PF01397">
    <property type="entry name" value="Terpene_synth"/>
    <property type="match status" value="1"/>
</dbReference>
<dbReference type="Pfam" id="PF03936">
    <property type="entry name" value="Terpene_synth_C"/>
    <property type="match status" value="1"/>
</dbReference>
<dbReference type="SFLD" id="SFLDS00005">
    <property type="entry name" value="Isoprenoid_Synthase_Type_I"/>
    <property type="match status" value="1"/>
</dbReference>
<dbReference type="SFLD" id="SFLDG01019">
    <property type="entry name" value="Terpene_Cyclase_Like_1_C_Termi"/>
    <property type="match status" value="1"/>
</dbReference>
<dbReference type="SUPFAM" id="SSF48239">
    <property type="entry name" value="Terpenoid cyclases/Protein prenyltransferases"/>
    <property type="match status" value="1"/>
</dbReference>
<dbReference type="SUPFAM" id="SSF48576">
    <property type="entry name" value="Terpenoid synthases"/>
    <property type="match status" value="1"/>
</dbReference>
<comment type="function">
    <text evidence="2">Sesquiterpene synthase involved in germacrene A biosynthesis (PubMed:21620424). Germacrene A is a precursor of several sesquiterpene lactones (PubMed:21620424).</text>
</comment>
<comment type="catalytic activity">
    <reaction evidence="2">
        <text>(2E,6E)-farnesyl diphosphate = (+)-(R)-germacrene A + diphosphate</text>
        <dbReference type="Rhea" id="RHEA:12516"/>
        <dbReference type="ChEBI" id="CHEBI:33019"/>
        <dbReference type="ChEBI" id="CHEBI:41595"/>
        <dbReference type="ChEBI" id="CHEBI:175763"/>
        <dbReference type="EC" id="4.2.3.23"/>
    </reaction>
    <physiologicalReaction direction="left-to-right" evidence="2">
        <dbReference type="Rhea" id="RHEA:12517"/>
    </physiologicalReaction>
</comment>
<comment type="cofactor">
    <cofactor evidence="1">
        <name>Mg(2+)</name>
        <dbReference type="ChEBI" id="CHEBI:18420"/>
    </cofactor>
    <text evidence="1">Binds 3 Mg(2+) ions per subunit.</text>
</comment>
<comment type="pathway">
    <text evidence="2">Secondary metabolite biosynthesis; terpenoid biosynthesis.</text>
</comment>
<comment type="subunit">
    <text evidence="1">Monomer.</text>
</comment>
<comment type="tissue specificity">
    <text evidence="2 3">Expressed in glandular trichomes of all aerial tissues, with highest levels in tissues accumulating parthenolide (e.g. flowers and, to some extent, leaves).</text>
</comment>
<comment type="developmental stage">
    <text evidence="2 3">During flowers development, mostly observed in ovaries during the biosynthetically most active stages (e.g. stages 2, 3 and 4, when petals are progressively opening).</text>
</comment>
<comment type="domain">
    <text evidence="1">The Asp-Asp-Xaa-Xaa-Asp/Glu (DDXXD/E) motif is important for the catalytic activity, presumably through binding to Mg(2+).</text>
</comment>
<comment type="similarity">
    <text evidence="5">Belongs to the terpene synthase family.</text>
</comment>
<proteinExistence type="evidence at protein level"/>
<evidence type="ECO:0000250" key="1">
    <source>
        <dbReference type="UniProtKB" id="Q40577"/>
    </source>
</evidence>
<evidence type="ECO:0000269" key="2">
    <source>
    </source>
</evidence>
<evidence type="ECO:0000269" key="3">
    <source>
    </source>
</evidence>
<evidence type="ECO:0000303" key="4">
    <source>
    </source>
</evidence>
<evidence type="ECO:0000305" key="5"/>
<name>GAS_TANPA</name>
<gene>
    <name evidence="4" type="primary">GAS</name>
</gene>